<reference key="1">
    <citation type="journal article" date="2005" name="Nucleic Acids Res.">
        <title>Genomic blueprint of Hahella chejuensis, a marine microbe producing an algicidal agent.</title>
        <authorList>
            <person name="Jeong H."/>
            <person name="Yim J.H."/>
            <person name="Lee C."/>
            <person name="Choi S.-H."/>
            <person name="Park Y.K."/>
            <person name="Yoon S.H."/>
            <person name="Hur C.-G."/>
            <person name="Kang H.-Y."/>
            <person name="Kim D."/>
            <person name="Lee H.H."/>
            <person name="Park K.H."/>
            <person name="Park S.-H."/>
            <person name="Park H.-S."/>
            <person name="Lee H.K."/>
            <person name="Oh T.K."/>
            <person name="Kim J.F."/>
        </authorList>
    </citation>
    <scope>NUCLEOTIDE SEQUENCE [LARGE SCALE GENOMIC DNA]</scope>
    <source>
        <strain>KCTC 2396</strain>
    </source>
</reference>
<protein>
    <recommendedName>
        <fullName evidence="1">Large ribosomal subunit protein uL13</fullName>
    </recommendedName>
    <alternativeName>
        <fullName evidence="2">50S ribosomal protein L13</fullName>
    </alternativeName>
</protein>
<organism>
    <name type="scientific">Hahella chejuensis (strain KCTC 2396)</name>
    <dbReference type="NCBI Taxonomy" id="349521"/>
    <lineage>
        <taxon>Bacteria</taxon>
        <taxon>Pseudomonadati</taxon>
        <taxon>Pseudomonadota</taxon>
        <taxon>Gammaproteobacteria</taxon>
        <taxon>Oceanospirillales</taxon>
        <taxon>Hahellaceae</taxon>
        <taxon>Hahella</taxon>
    </lineage>
</organism>
<sequence length="142" mass="16157">MKTISAKPETVKRDWYVIDATDKTLGRLSTEIARRLRGKHKAEYTPHVDTGDYIVVVNAEKVRVTGNKAQDKMYYRHTGYPGGLKEMSFDKLIQHAPERVIETAVKGMMPRNPLGRAMLKKLKVYASAEHPHTAQQPIELKI</sequence>
<keyword id="KW-1185">Reference proteome</keyword>
<keyword id="KW-0687">Ribonucleoprotein</keyword>
<keyword id="KW-0689">Ribosomal protein</keyword>
<comment type="function">
    <text evidence="1">This protein is one of the early assembly proteins of the 50S ribosomal subunit, although it is not seen to bind rRNA by itself. It is important during the early stages of 50S assembly.</text>
</comment>
<comment type="subunit">
    <text evidence="1">Part of the 50S ribosomal subunit.</text>
</comment>
<comment type="similarity">
    <text evidence="1">Belongs to the universal ribosomal protein uL13 family.</text>
</comment>
<dbReference type="EMBL" id="CP000155">
    <property type="protein sequence ID" value="ABC32552.1"/>
    <property type="molecule type" value="Genomic_DNA"/>
</dbReference>
<dbReference type="RefSeq" id="WP_011399611.1">
    <property type="nucleotide sequence ID" value="NC_007645.1"/>
</dbReference>
<dbReference type="SMR" id="Q2S9X2"/>
<dbReference type="STRING" id="349521.HCH_05902"/>
<dbReference type="KEGG" id="hch:HCH_05902"/>
<dbReference type="eggNOG" id="COG0102">
    <property type="taxonomic scope" value="Bacteria"/>
</dbReference>
<dbReference type="HOGENOM" id="CLU_082184_2_2_6"/>
<dbReference type="OrthoDB" id="9801330at2"/>
<dbReference type="Proteomes" id="UP000000238">
    <property type="component" value="Chromosome"/>
</dbReference>
<dbReference type="GO" id="GO:0022625">
    <property type="term" value="C:cytosolic large ribosomal subunit"/>
    <property type="evidence" value="ECO:0007669"/>
    <property type="project" value="TreeGrafter"/>
</dbReference>
<dbReference type="GO" id="GO:0003729">
    <property type="term" value="F:mRNA binding"/>
    <property type="evidence" value="ECO:0007669"/>
    <property type="project" value="TreeGrafter"/>
</dbReference>
<dbReference type="GO" id="GO:0003735">
    <property type="term" value="F:structural constituent of ribosome"/>
    <property type="evidence" value="ECO:0007669"/>
    <property type="project" value="InterPro"/>
</dbReference>
<dbReference type="GO" id="GO:0017148">
    <property type="term" value="P:negative regulation of translation"/>
    <property type="evidence" value="ECO:0007669"/>
    <property type="project" value="TreeGrafter"/>
</dbReference>
<dbReference type="GO" id="GO:0006412">
    <property type="term" value="P:translation"/>
    <property type="evidence" value="ECO:0007669"/>
    <property type="project" value="UniProtKB-UniRule"/>
</dbReference>
<dbReference type="CDD" id="cd00392">
    <property type="entry name" value="Ribosomal_L13"/>
    <property type="match status" value="1"/>
</dbReference>
<dbReference type="FunFam" id="3.90.1180.10:FF:000001">
    <property type="entry name" value="50S ribosomal protein L13"/>
    <property type="match status" value="1"/>
</dbReference>
<dbReference type="Gene3D" id="3.90.1180.10">
    <property type="entry name" value="Ribosomal protein L13"/>
    <property type="match status" value="1"/>
</dbReference>
<dbReference type="HAMAP" id="MF_01366">
    <property type="entry name" value="Ribosomal_uL13"/>
    <property type="match status" value="1"/>
</dbReference>
<dbReference type="InterPro" id="IPR005822">
    <property type="entry name" value="Ribosomal_uL13"/>
</dbReference>
<dbReference type="InterPro" id="IPR005823">
    <property type="entry name" value="Ribosomal_uL13_bac-type"/>
</dbReference>
<dbReference type="InterPro" id="IPR036899">
    <property type="entry name" value="Ribosomal_uL13_sf"/>
</dbReference>
<dbReference type="NCBIfam" id="TIGR01066">
    <property type="entry name" value="rplM_bact"/>
    <property type="match status" value="1"/>
</dbReference>
<dbReference type="PANTHER" id="PTHR11545:SF2">
    <property type="entry name" value="LARGE RIBOSOMAL SUBUNIT PROTEIN UL13M"/>
    <property type="match status" value="1"/>
</dbReference>
<dbReference type="PANTHER" id="PTHR11545">
    <property type="entry name" value="RIBOSOMAL PROTEIN L13"/>
    <property type="match status" value="1"/>
</dbReference>
<dbReference type="Pfam" id="PF00572">
    <property type="entry name" value="Ribosomal_L13"/>
    <property type="match status" value="1"/>
</dbReference>
<dbReference type="PIRSF" id="PIRSF002181">
    <property type="entry name" value="Ribosomal_L13"/>
    <property type="match status" value="1"/>
</dbReference>
<dbReference type="SUPFAM" id="SSF52161">
    <property type="entry name" value="Ribosomal protein L13"/>
    <property type="match status" value="1"/>
</dbReference>
<gene>
    <name evidence="1" type="primary">rplM</name>
    <name type="ordered locus">HCH_05902</name>
</gene>
<evidence type="ECO:0000255" key="1">
    <source>
        <dbReference type="HAMAP-Rule" id="MF_01366"/>
    </source>
</evidence>
<evidence type="ECO:0000305" key="2"/>
<accession>Q2S9X2</accession>
<proteinExistence type="inferred from homology"/>
<feature type="chain" id="PRO_0000261734" description="Large ribosomal subunit protein uL13">
    <location>
        <begin position="1"/>
        <end position="142"/>
    </location>
</feature>
<name>RL13_HAHCH</name>